<keyword id="KW-0963">Cytoplasm</keyword>
<keyword id="KW-0251">Elongation factor</keyword>
<keyword id="KW-0342">GTP-binding</keyword>
<keyword id="KW-0547">Nucleotide-binding</keyword>
<keyword id="KW-0648">Protein biosynthesis</keyword>
<keyword id="KW-1185">Reference proteome</keyword>
<name>EFG2_BURPS</name>
<sequence length="700" mass="77446">MARKTPIERYRNIGISAHIDAGKTTTTERILFYTGVNHKIGEVHDGAATMDWMEQEQERGITITSAATTAFWKGMGNNYPEHRINIIDTPGHVDFTIEVERSMRVLDGACMVYCAVGGVQPQSETVWRQANKYKVPRLAFVNKMDRTGANFFKVYDQLKLRLKANPVPVVVPIGAEENFKGVVDLLKMKAIIWDEASQGTKFDYVDIPAELADTCQEWREKMVEAAAEASEDLMNKYLEEGDLPEADIVKALRDRTIACEIQPMLCGTAFKNKGVQRMLDAVIDFLPSPVDIPPVKGELESGEAAERQASDEEKFSSLAFKIMTDPFVGQLIFFRVYSGVVNSGDTLLNSTKGKKERLGRILQMHANQREEIKEVRAGDIAAAVGLKEATTGDTLCDPAHPIVLERMVFPEPVISQAVEPKTKADQEKMGLALNRLAQEDPSFRVQTDEESGQTIISGMGELHLEILVDRMKREFGVEATVGKPQVAYRETIRSTAKDVDGKFVKQSGGRGQYGHAVITLEPNEQGKGYEFFDEIKGGVIPREYIPAVDKGIQDTLKSGVLAGFPVVDVKVHLTFGSYHDVDSNENAFRMAGSMAFKEAMRRANPVVLEPMMAVEVETPEDYMGNVMGDLSGRRGIVQGMEDMVGGGKIVRAEVPLSEMFGYSTSLRSLTQGRATYTMEFKHYAEAPKNVADAIISAKSK</sequence>
<organism>
    <name type="scientific">Burkholderia pseudomallei (strain K96243)</name>
    <dbReference type="NCBI Taxonomy" id="272560"/>
    <lineage>
        <taxon>Bacteria</taxon>
        <taxon>Pseudomonadati</taxon>
        <taxon>Pseudomonadota</taxon>
        <taxon>Betaproteobacteria</taxon>
        <taxon>Burkholderiales</taxon>
        <taxon>Burkholderiaceae</taxon>
        <taxon>Burkholderia</taxon>
        <taxon>pseudomallei group</taxon>
    </lineage>
</organism>
<accession>Q63Q08</accession>
<feature type="chain" id="PRO_0000091096" description="Elongation factor G 2">
    <location>
        <begin position="1"/>
        <end position="700"/>
    </location>
</feature>
<feature type="domain" description="tr-type G">
    <location>
        <begin position="8"/>
        <end position="290"/>
    </location>
</feature>
<feature type="binding site" evidence="1">
    <location>
        <begin position="17"/>
        <end position="24"/>
    </location>
    <ligand>
        <name>GTP</name>
        <dbReference type="ChEBI" id="CHEBI:37565"/>
    </ligand>
</feature>
<feature type="binding site" evidence="1">
    <location>
        <begin position="88"/>
        <end position="92"/>
    </location>
    <ligand>
        <name>GTP</name>
        <dbReference type="ChEBI" id="CHEBI:37565"/>
    </ligand>
</feature>
<feature type="binding site" evidence="1">
    <location>
        <begin position="142"/>
        <end position="145"/>
    </location>
    <ligand>
        <name>GTP</name>
        <dbReference type="ChEBI" id="CHEBI:37565"/>
    </ligand>
</feature>
<proteinExistence type="inferred from homology"/>
<reference key="1">
    <citation type="journal article" date="2004" name="Proc. Natl. Acad. Sci. U.S.A.">
        <title>Genomic plasticity of the causative agent of melioidosis, Burkholderia pseudomallei.</title>
        <authorList>
            <person name="Holden M.T.G."/>
            <person name="Titball R.W."/>
            <person name="Peacock S.J."/>
            <person name="Cerdeno-Tarraga A.-M."/>
            <person name="Atkins T."/>
            <person name="Crossman L.C."/>
            <person name="Pitt T."/>
            <person name="Churcher C."/>
            <person name="Mungall K.L."/>
            <person name="Bentley S.D."/>
            <person name="Sebaihia M."/>
            <person name="Thomson N.R."/>
            <person name="Bason N."/>
            <person name="Beacham I.R."/>
            <person name="Brooks K."/>
            <person name="Brown K.A."/>
            <person name="Brown N.F."/>
            <person name="Challis G.L."/>
            <person name="Cherevach I."/>
            <person name="Chillingworth T."/>
            <person name="Cronin A."/>
            <person name="Crossett B."/>
            <person name="Davis P."/>
            <person name="DeShazer D."/>
            <person name="Feltwell T."/>
            <person name="Fraser A."/>
            <person name="Hance Z."/>
            <person name="Hauser H."/>
            <person name="Holroyd S."/>
            <person name="Jagels K."/>
            <person name="Keith K.E."/>
            <person name="Maddison M."/>
            <person name="Moule S."/>
            <person name="Price C."/>
            <person name="Quail M.A."/>
            <person name="Rabbinowitsch E."/>
            <person name="Rutherford K."/>
            <person name="Sanders M."/>
            <person name="Simmonds M."/>
            <person name="Songsivilai S."/>
            <person name="Stevens K."/>
            <person name="Tumapa S."/>
            <person name="Vesaratchavest M."/>
            <person name="Whitehead S."/>
            <person name="Yeats C."/>
            <person name="Barrell B.G."/>
            <person name="Oyston P.C.F."/>
            <person name="Parkhill J."/>
        </authorList>
    </citation>
    <scope>NUCLEOTIDE SEQUENCE [LARGE SCALE GENOMIC DNA]</scope>
    <source>
        <strain>K96243</strain>
    </source>
</reference>
<protein>
    <recommendedName>
        <fullName evidence="1">Elongation factor G 2</fullName>
        <shortName evidence="1">EF-G 2</shortName>
    </recommendedName>
</protein>
<comment type="function">
    <text evidence="1">Catalyzes the GTP-dependent ribosomal translocation step during translation elongation. During this step, the ribosome changes from the pre-translocational (PRE) to the post-translocational (POST) state as the newly formed A-site-bound peptidyl-tRNA and P-site-bound deacylated tRNA move to the P and E sites, respectively. Catalyzes the coordinated movement of the two tRNA molecules, the mRNA and conformational changes in the ribosome.</text>
</comment>
<comment type="subcellular location">
    <subcellularLocation>
        <location evidence="1">Cytoplasm</location>
    </subcellularLocation>
</comment>
<comment type="similarity">
    <text evidence="1">Belongs to the TRAFAC class translation factor GTPase superfamily. Classic translation factor GTPase family. EF-G/EF-2 subfamily.</text>
</comment>
<gene>
    <name evidence="1" type="primary">fusA2</name>
    <name type="ordered locus">BPSL3216</name>
</gene>
<dbReference type="EMBL" id="BX571965">
    <property type="protein sequence ID" value="CAH37227.1"/>
    <property type="molecule type" value="Genomic_DNA"/>
</dbReference>
<dbReference type="RefSeq" id="YP_109810.1">
    <property type="nucleotide sequence ID" value="NC_006350.1"/>
</dbReference>
<dbReference type="SMR" id="Q63Q08"/>
<dbReference type="STRING" id="272560.BPSL3216"/>
<dbReference type="KEGG" id="bps:BPSL3216"/>
<dbReference type="PATRIC" id="fig|272560.51.peg.2022"/>
<dbReference type="eggNOG" id="COG0480">
    <property type="taxonomic scope" value="Bacteria"/>
</dbReference>
<dbReference type="Proteomes" id="UP000000605">
    <property type="component" value="Chromosome 1"/>
</dbReference>
<dbReference type="GO" id="GO:0005737">
    <property type="term" value="C:cytoplasm"/>
    <property type="evidence" value="ECO:0007669"/>
    <property type="project" value="UniProtKB-SubCell"/>
</dbReference>
<dbReference type="GO" id="GO:0005525">
    <property type="term" value="F:GTP binding"/>
    <property type="evidence" value="ECO:0007669"/>
    <property type="project" value="UniProtKB-UniRule"/>
</dbReference>
<dbReference type="GO" id="GO:0003924">
    <property type="term" value="F:GTPase activity"/>
    <property type="evidence" value="ECO:0007669"/>
    <property type="project" value="InterPro"/>
</dbReference>
<dbReference type="GO" id="GO:0097216">
    <property type="term" value="F:guanosine tetraphosphate binding"/>
    <property type="evidence" value="ECO:0007669"/>
    <property type="project" value="UniProtKB-ARBA"/>
</dbReference>
<dbReference type="GO" id="GO:0003746">
    <property type="term" value="F:translation elongation factor activity"/>
    <property type="evidence" value="ECO:0007669"/>
    <property type="project" value="UniProtKB-UniRule"/>
</dbReference>
<dbReference type="GO" id="GO:0032790">
    <property type="term" value="P:ribosome disassembly"/>
    <property type="evidence" value="ECO:0007669"/>
    <property type="project" value="TreeGrafter"/>
</dbReference>
<dbReference type="CDD" id="cd01886">
    <property type="entry name" value="EF-G"/>
    <property type="match status" value="1"/>
</dbReference>
<dbReference type="CDD" id="cd16262">
    <property type="entry name" value="EFG_III"/>
    <property type="match status" value="1"/>
</dbReference>
<dbReference type="CDD" id="cd01434">
    <property type="entry name" value="EFG_mtEFG1_IV"/>
    <property type="match status" value="1"/>
</dbReference>
<dbReference type="CDD" id="cd03713">
    <property type="entry name" value="EFG_mtEFG_C"/>
    <property type="match status" value="1"/>
</dbReference>
<dbReference type="CDD" id="cd04088">
    <property type="entry name" value="EFG_mtEFG_II"/>
    <property type="match status" value="1"/>
</dbReference>
<dbReference type="FunFam" id="2.40.30.10:FF:000006">
    <property type="entry name" value="Elongation factor G"/>
    <property type="match status" value="1"/>
</dbReference>
<dbReference type="FunFam" id="3.30.230.10:FF:000003">
    <property type="entry name" value="Elongation factor G"/>
    <property type="match status" value="1"/>
</dbReference>
<dbReference type="FunFam" id="3.30.70.240:FF:000001">
    <property type="entry name" value="Elongation factor G"/>
    <property type="match status" value="1"/>
</dbReference>
<dbReference type="FunFam" id="3.30.70.870:FF:000001">
    <property type="entry name" value="Elongation factor G"/>
    <property type="match status" value="1"/>
</dbReference>
<dbReference type="FunFam" id="3.40.50.300:FF:000029">
    <property type="entry name" value="Elongation factor G"/>
    <property type="match status" value="1"/>
</dbReference>
<dbReference type="Gene3D" id="3.30.230.10">
    <property type="match status" value="1"/>
</dbReference>
<dbReference type="Gene3D" id="3.30.70.240">
    <property type="match status" value="1"/>
</dbReference>
<dbReference type="Gene3D" id="3.30.70.870">
    <property type="entry name" value="Elongation Factor G (Translational Gtpase), domain 3"/>
    <property type="match status" value="1"/>
</dbReference>
<dbReference type="Gene3D" id="3.40.50.300">
    <property type="entry name" value="P-loop containing nucleotide triphosphate hydrolases"/>
    <property type="match status" value="1"/>
</dbReference>
<dbReference type="Gene3D" id="2.40.30.10">
    <property type="entry name" value="Translation factors"/>
    <property type="match status" value="1"/>
</dbReference>
<dbReference type="HAMAP" id="MF_00054_B">
    <property type="entry name" value="EF_G_EF_2_B"/>
    <property type="match status" value="1"/>
</dbReference>
<dbReference type="InterPro" id="IPR041095">
    <property type="entry name" value="EFG_II"/>
</dbReference>
<dbReference type="InterPro" id="IPR009022">
    <property type="entry name" value="EFG_III"/>
</dbReference>
<dbReference type="InterPro" id="IPR035647">
    <property type="entry name" value="EFG_III/V"/>
</dbReference>
<dbReference type="InterPro" id="IPR047872">
    <property type="entry name" value="EFG_IV"/>
</dbReference>
<dbReference type="InterPro" id="IPR035649">
    <property type="entry name" value="EFG_V"/>
</dbReference>
<dbReference type="InterPro" id="IPR000640">
    <property type="entry name" value="EFG_V-like"/>
</dbReference>
<dbReference type="InterPro" id="IPR004161">
    <property type="entry name" value="EFTu-like_2"/>
</dbReference>
<dbReference type="InterPro" id="IPR031157">
    <property type="entry name" value="G_TR_CS"/>
</dbReference>
<dbReference type="InterPro" id="IPR027417">
    <property type="entry name" value="P-loop_NTPase"/>
</dbReference>
<dbReference type="InterPro" id="IPR020568">
    <property type="entry name" value="Ribosomal_Su5_D2-typ_SF"/>
</dbReference>
<dbReference type="InterPro" id="IPR014721">
    <property type="entry name" value="Ribsml_uS5_D2-typ_fold_subgr"/>
</dbReference>
<dbReference type="InterPro" id="IPR005225">
    <property type="entry name" value="Small_GTP-bd"/>
</dbReference>
<dbReference type="InterPro" id="IPR000795">
    <property type="entry name" value="T_Tr_GTP-bd_dom"/>
</dbReference>
<dbReference type="InterPro" id="IPR009000">
    <property type="entry name" value="Transl_B-barrel_sf"/>
</dbReference>
<dbReference type="InterPro" id="IPR004540">
    <property type="entry name" value="Transl_elong_EFG/EF2"/>
</dbReference>
<dbReference type="InterPro" id="IPR005517">
    <property type="entry name" value="Transl_elong_EFG/EF2_IV"/>
</dbReference>
<dbReference type="NCBIfam" id="TIGR00484">
    <property type="entry name" value="EF-G"/>
    <property type="match status" value="1"/>
</dbReference>
<dbReference type="NCBIfam" id="NF009381">
    <property type="entry name" value="PRK12740.1-5"/>
    <property type="match status" value="1"/>
</dbReference>
<dbReference type="NCBIfam" id="TIGR00231">
    <property type="entry name" value="small_GTP"/>
    <property type="match status" value="1"/>
</dbReference>
<dbReference type="PANTHER" id="PTHR43261:SF1">
    <property type="entry name" value="RIBOSOME-RELEASING FACTOR 2, MITOCHONDRIAL"/>
    <property type="match status" value="1"/>
</dbReference>
<dbReference type="PANTHER" id="PTHR43261">
    <property type="entry name" value="TRANSLATION ELONGATION FACTOR G-RELATED"/>
    <property type="match status" value="1"/>
</dbReference>
<dbReference type="Pfam" id="PF00679">
    <property type="entry name" value="EFG_C"/>
    <property type="match status" value="1"/>
</dbReference>
<dbReference type="Pfam" id="PF14492">
    <property type="entry name" value="EFG_III"/>
    <property type="match status" value="1"/>
</dbReference>
<dbReference type="Pfam" id="PF03764">
    <property type="entry name" value="EFG_IV"/>
    <property type="match status" value="1"/>
</dbReference>
<dbReference type="Pfam" id="PF00009">
    <property type="entry name" value="GTP_EFTU"/>
    <property type="match status" value="1"/>
</dbReference>
<dbReference type="Pfam" id="PF03144">
    <property type="entry name" value="GTP_EFTU_D2"/>
    <property type="match status" value="1"/>
</dbReference>
<dbReference type="PRINTS" id="PR00315">
    <property type="entry name" value="ELONGATNFCT"/>
</dbReference>
<dbReference type="SMART" id="SM00838">
    <property type="entry name" value="EFG_C"/>
    <property type="match status" value="1"/>
</dbReference>
<dbReference type="SMART" id="SM00889">
    <property type="entry name" value="EFG_IV"/>
    <property type="match status" value="1"/>
</dbReference>
<dbReference type="SUPFAM" id="SSF54980">
    <property type="entry name" value="EF-G C-terminal domain-like"/>
    <property type="match status" value="2"/>
</dbReference>
<dbReference type="SUPFAM" id="SSF52540">
    <property type="entry name" value="P-loop containing nucleoside triphosphate hydrolases"/>
    <property type="match status" value="1"/>
</dbReference>
<dbReference type="SUPFAM" id="SSF54211">
    <property type="entry name" value="Ribosomal protein S5 domain 2-like"/>
    <property type="match status" value="1"/>
</dbReference>
<dbReference type="SUPFAM" id="SSF50447">
    <property type="entry name" value="Translation proteins"/>
    <property type="match status" value="1"/>
</dbReference>
<dbReference type="PROSITE" id="PS00301">
    <property type="entry name" value="G_TR_1"/>
    <property type="match status" value="1"/>
</dbReference>
<dbReference type="PROSITE" id="PS51722">
    <property type="entry name" value="G_TR_2"/>
    <property type="match status" value="1"/>
</dbReference>
<evidence type="ECO:0000255" key="1">
    <source>
        <dbReference type="HAMAP-Rule" id="MF_00054"/>
    </source>
</evidence>